<organism>
    <name type="scientific">Arabidopsis thaliana</name>
    <name type="common">Mouse-ear cress</name>
    <dbReference type="NCBI Taxonomy" id="3702"/>
    <lineage>
        <taxon>Eukaryota</taxon>
        <taxon>Viridiplantae</taxon>
        <taxon>Streptophyta</taxon>
        <taxon>Embryophyta</taxon>
        <taxon>Tracheophyta</taxon>
        <taxon>Spermatophyta</taxon>
        <taxon>Magnoliopsida</taxon>
        <taxon>eudicotyledons</taxon>
        <taxon>Gunneridae</taxon>
        <taxon>Pentapetalae</taxon>
        <taxon>rosids</taxon>
        <taxon>malvids</taxon>
        <taxon>Brassicales</taxon>
        <taxon>Brassicaceae</taxon>
        <taxon>Camelineae</taxon>
        <taxon>Arabidopsis</taxon>
    </lineage>
</organism>
<proteinExistence type="evidence at protein level"/>
<dbReference type="EC" id="1.14.11.-" evidence="1 2"/>
<dbReference type="EMBL" id="AL132976">
    <property type="protein sequence ID" value="CAB62300.1"/>
    <property type="status" value="ALT_SEQ"/>
    <property type="molecule type" value="Genomic_DNA"/>
</dbReference>
<dbReference type="EMBL" id="CP002686">
    <property type="protein sequence ID" value="AEE78640.1"/>
    <property type="molecule type" value="Genomic_DNA"/>
</dbReference>
<dbReference type="EMBL" id="CP002686">
    <property type="protein sequence ID" value="AEE78641.1"/>
    <property type="molecule type" value="Genomic_DNA"/>
</dbReference>
<dbReference type="EMBL" id="CP002686">
    <property type="protein sequence ID" value="ANM65356.1"/>
    <property type="molecule type" value="Genomic_DNA"/>
</dbReference>
<dbReference type="EMBL" id="BT006421">
    <property type="protein sequence ID" value="AAP21229.1"/>
    <property type="molecule type" value="mRNA"/>
</dbReference>
<dbReference type="EMBL" id="AK317326">
    <property type="protein sequence ID" value="BAH20000.1"/>
    <property type="molecule type" value="mRNA"/>
</dbReference>
<dbReference type="EMBL" id="AK227940">
    <property type="protein sequence ID" value="BAE99908.1"/>
    <property type="molecule type" value="mRNA"/>
</dbReference>
<dbReference type="EMBL" id="AY086558">
    <property type="protein sequence ID" value="AAM63621.1"/>
    <property type="molecule type" value="mRNA"/>
</dbReference>
<dbReference type="PIR" id="T45567">
    <property type="entry name" value="T45567"/>
</dbReference>
<dbReference type="RefSeq" id="NP_001030834.1">
    <molecule id="Q84MB6-1"/>
    <property type="nucleotide sequence ID" value="NM_001035757.6"/>
</dbReference>
<dbReference type="RefSeq" id="NP_001327334.1">
    <molecule id="Q84MB6-1"/>
    <property type="nucleotide sequence ID" value="NM_001339459.1"/>
</dbReference>
<dbReference type="RefSeq" id="NP_566930.1">
    <molecule id="Q84MB6-1"/>
    <property type="nucleotide sequence ID" value="NM_114881.9"/>
</dbReference>
<dbReference type="SMR" id="Q84MB6"/>
<dbReference type="FunCoup" id="Q84MB6">
    <property type="interactions" value="163"/>
</dbReference>
<dbReference type="STRING" id="3702.Q84MB6"/>
<dbReference type="PaxDb" id="3702-AT3G50210.1"/>
<dbReference type="ProteomicsDB" id="222208">
    <molecule id="Q84MB6-1"/>
</dbReference>
<dbReference type="EnsemblPlants" id="AT3G50210.1">
    <molecule id="Q84MB6-1"/>
    <property type="protein sequence ID" value="AT3G50210.1"/>
    <property type="gene ID" value="AT3G50210"/>
</dbReference>
<dbReference type="EnsemblPlants" id="AT3G50210.3">
    <molecule id="Q84MB6-1"/>
    <property type="protein sequence ID" value="AT3G50210.3"/>
    <property type="gene ID" value="AT3G50210"/>
</dbReference>
<dbReference type="EnsemblPlants" id="AT3G50210.4">
    <molecule id="Q84MB6-1"/>
    <property type="protein sequence ID" value="AT3G50210.4"/>
    <property type="gene ID" value="AT3G50210"/>
</dbReference>
<dbReference type="GeneID" id="824183"/>
<dbReference type="Gramene" id="AT3G50210.1">
    <molecule id="Q84MB6-1"/>
    <property type="protein sequence ID" value="AT3G50210.1"/>
    <property type="gene ID" value="AT3G50210"/>
</dbReference>
<dbReference type="Gramene" id="AT3G50210.3">
    <molecule id="Q84MB6-1"/>
    <property type="protein sequence ID" value="AT3G50210.3"/>
    <property type="gene ID" value="AT3G50210"/>
</dbReference>
<dbReference type="Gramene" id="AT3G50210.4">
    <molecule id="Q84MB6-1"/>
    <property type="protein sequence ID" value="AT3G50210.4"/>
    <property type="gene ID" value="AT3G50210"/>
</dbReference>
<dbReference type="KEGG" id="ath:AT3G50210"/>
<dbReference type="Araport" id="AT3G50210"/>
<dbReference type="TAIR" id="AT3G50210"/>
<dbReference type="eggNOG" id="KOG0143">
    <property type="taxonomic scope" value="Eukaryota"/>
</dbReference>
<dbReference type="HOGENOM" id="CLU_010119_6_0_1"/>
<dbReference type="InParanoid" id="Q84MB6"/>
<dbReference type="OMA" id="ARETGFF"/>
<dbReference type="PhylomeDB" id="Q84MB6"/>
<dbReference type="BioCyc" id="ARA:AT3G50210-MONOMER"/>
<dbReference type="PRO" id="PR:Q84MB6"/>
<dbReference type="Proteomes" id="UP000006548">
    <property type="component" value="Chromosome 3"/>
</dbReference>
<dbReference type="ExpressionAtlas" id="Q84MB6">
    <property type="expression patterns" value="baseline and differential"/>
</dbReference>
<dbReference type="GO" id="GO:0005829">
    <property type="term" value="C:cytosol"/>
    <property type="evidence" value="ECO:0000314"/>
    <property type="project" value="UniProtKB"/>
</dbReference>
<dbReference type="GO" id="GO:0016706">
    <property type="term" value="F:2-oxoglutarate-dependent dioxygenase activity"/>
    <property type="evidence" value="ECO:0000314"/>
    <property type="project" value="UniProtKB"/>
</dbReference>
<dbReference type="GO" id="GO:0046872">
    <property type="term" value="F:metal ion binding"/>
    <property type="evidence" value="ECO:0007669"/>
    <property type="project" value="UniProtKB-KW"/>
</dbReference>
<dbReference type="FunFam" id="2.60.120.330:FF:000024">
    <property type="entry name" value="Probable 2-oxoglutarate-dependent dioxygenase At3g49630"/>
    <property type="match status" value="1"/>
</dbReference>
<dbReference type="Gene3D" id="2.60.120.330">
    <property type="entry name" value="B-lactam Antibiotic, Isopenicillin N Synthase, Chain"/>
    <property type="match status" value="1"/>
</dbReference>
<dbReference type="InterPro" id="IPR026992">
    <property type="entry name" value="DIOX_N"/>
</dbReference>
<dbReference type="InterPro" id="IPR044861">
    <property type="entry name" value="IPNS-like_FE2OG_OXY"/>
</dbReference>
<dbReference type="InterPro" id="IPR027443">
    <property type="entry name" value="IPNS-like_sf"/>
</dbReference>
<dbReference type="InterPro" id="IPR050231">
    <property type="entry name" value="Iron_ascorbate_oxido_reductase"/>
</dbReference>
<dbReference type="InterPro" id="IPR005123">
    <property type="entry name" value="Oxoglu/Fe-dep_dioxygenase_dom"/>
</dbReference>
<dbReference type="PANTHER" id="PTHR47990">
    <property type="entry name" value="2-OXOGLUTARATE (2OG) AND FE(II)-DEPENDENT OXYGENASE SUPERFAMILY PROTEIN-RELATED"/>
    <property type="match status" value="1"/>
</dbReference>
<dbReference type="Pfam" id="PF03171">
    <property type="entry name" value="2OG-FeII_Oxy"/>
    <property type="match status" value="1"/>
</dbReference>
<dbReference type="Pfam" id="PF14226">
    <property type="entry name" value="DIOX_N"/>
    <property type="match status" value="1"/>
</dbReference>
<dbReference type="PRINTS" id="PR00682">
    <property type="entry name" value="IPNSYNTHASE"/>
</dbReference>
<dbReference type="SUPFAM" id="SSF51197">
    <property type="entry name" value="Clavaminate synthase-like"/>
    <property type="match status" value="1"/>
</dbReference>
<dbReference type="PROSITE" id="PS51471">
    <property type="entry name" value="FE2OG_OXY"/>
    <property type="match status" value="1"/>
</dbReference>
<sequence>MATDFKSLPVIDISRLLLKCDDPDMAEDVGVAEVVQQLDKACRDAGFFYVIGHGISEDVINKVREITREFFKLPYEEKLKIKMTPAAGYRGYQRIGENVTKGIPDIHEAIDCYREIKQGKYGDIGKVMEGPNQWPENPQEFKELMEEYIKLCTDLSRKILRGISLALAGSPYEFEGKMAGDPFWVMRLIGYPGAEFTNGQPENDIGCGAHTDYGLLTLVNQDDDKTALQVRNLGGEWISAIPIPGSFVCNIGDMLKILSNGVYESTLHRVINNSPQYRVCVAFFYETNFDAVVEPLDICKQKYPGGRGGCQVFKRAVYGEHLVSKVQTNFAM</sequence>
<reference key="1">
    <citation type="journal article" date="2000" name="Nature">
        <title>Sequence and analysis of chromosome 3 of the plant Arabidopsis thaliana.</title>
        <authorList>
            <person name="Salanoubat M."/>
            <person name="Lemcke K."/>
            <person name="Rieger M."/>
            <person name="Ansorge W."/>
            <person name="Unseld M."/>
            <person name="Fartmann B."/>
            <person name="Valle G."/>
            <person name="Bloecker H."/>
            <person name="Perez-Alonso M."/>
            <person name="Obermaier B."/>
            <person name="Delseny M."/>
            <person name="Boutry M."/>
            <person name="Grivell L.A."/>
            <person name="Mache R."/>
            <person name="Puigdomenech P."/>
            <person name="De Simone V."/>
            <person name="Choisne N."/>
            <person name="Artiguenave F."/>
            <person name="Robert C."/>
            <person name="Brottier P."/>
            <person name="Wincker P."/>
            <person name="Cattolico L."/>
            <person name="Weissenbach J."/>
            <person name="Saurin W."/>
            <person name="Quetier F."/>
            <person name="Schaefer M."/>
            <person name="Mueller-Auer S."/>
            <person name="Gabel C."/>
            <person name="Fuchs M."/>
            <person name="Benes V."/>
            <person name="Wurmbach E."/>
            <person name="Drzonek H."/>
            <person name="Erfle H."/>
            <person name="Jordan N."/>
            <person name="Bangert S."/>
            <person name="Wiedelmann R."/>
            <person name="Kranz H."/>
            <person name="Voss H."/>
            <person name="Holland R."/>
            <person name="Brandt P."/>
            <person name="Nyakatura G."/>
            <person name="Vezzi A."/>
            <person name="D'Angelo M."/>
            <person name="Pallavicini A."/>
            <person name="Toppo S."/>
            <person name="Simionati B."/>
            <person name="Conrad A."/>
            <person name="Hornischer K."/>
            <person name="Kauer G."/>
            <person name="Loehnert T.-H."/>
            <person name="Nordsiek G."/>
            <person name="Reichelt J."/>
            <person name="Scharfe M."/>
            <person name="Schoen O."/>
            <person name="Bargues M."/>
            <person name="Terol J."/>
            <person name="Climent J."/>
            <person name="Navarro P."/>
            <person name="Collado C."/>
            <person name="Perez-Perez A."/>
            <person name="Ottenwaelder B."/>
            <person name="Duchemin D."/>
            <person name="Cooke R."/>
            <person name="Laudie M."/>
            <person name="Berger-Llauro C."/>
            <person name="Purnelle B."/>
            <person name="Masuy D."/>
            <person name="de Haan M."/>
            <person name="Maarse A.C."/>
            <person name="Alcaraz J.-P."/>
            <person name="Cottet A."/>
            <person name="Casacuberta E."/>
            <person name="Monfort A."/>
            <person name="Argiriou A."/>
            <person name="Flores M."/>
            <person name="Liguori R."/>
            <person name="Vitale D."/>
            <person name="Mannhaupt G."/>
            <person name="Haase D."/>
            <person name="Schoof H."/>
            <person name="Rudd S."/>
            <person name="Zaccaria P."/>
            <person name="Mewes H.-W."/>
            <person name="Mayer K.F.X."/>
            <person name="Kaul S."/>
            <person name="Town C.D."/>
            <person name="Koo H.L."/>
            <person name="Tallon L.J."/>
            <person name="Jenkins J."/>
            <person name="Rooney T."/>
            <person name="Rizzo M."/>
            <person name="Walts A."/>
            <person name="Utterback T."/>
            <person name="Fujii C.Y."/>
            <person name="Shea T.P."/>
            <person name="Creasy T.H."/>
            <person name="Haas B."/>
            <person name="Maiti R."/>
            <person name="Wu D."/>
            <person name="Peterson J."/>
            <person name="Van Aken S."/>
            <person name="Pai G."/>
            <person name="Militscher J."/>
            <person name="Sellers P."/>
            <person name="Gill J.E."/>
            <person name="Feldblyum T.V."/>
            <person name="Preuss D."/>
            <person name="Lin X."/>
            <person name="Nierman W.C."/>
            <person name="Salzberg S.L."/>
            <person name="White O."/>
            <person name="Venter J.C."/>
            <person name="Fraser C.M."/>
            <person name="Kaneko T."/>
            <person name="Nakamura Y."/>
            <person name="Sato S."/>
            <person name="Kato T."/>
            <person name="Asamizu E."/>
            <person name="Sasamoto S."/>
            <person name="Kimura T."/>
            <person name="Idesawa K."/>
            <person name="Kawashima K."/>
            <person name="Kishida Y."/>
            <person name="Kiyokawa C."/>
            <person name="Kohara M."/>
            <person name="Matsumoto M."/>
            <person name="Matsuno A."/>
            <person name="Muraki A."/>
            <person name="Nakayama S."/>
            <person name="Nakazaki N."/>
            <person name="Shinpo S."/>
            <person name="Takeuchi C."/>
            <person name="Wada T."/>
            <person name="Watanabe A."/>
            <person name="Yamada M."/>
            <person name="Yasuda M."/>
            <person name="Tabata S."/>
        </authorList>
    </citation>
    <scope>NUCLEOTIDE SEQUENCE [LARGE SCALE GENOMIC DNA]</scope>
    <source>
        <strain>cv. Columbia</strain>
    </source>
</reference>
<reference key="2">
    <citation type="journal article" date="2017" name="Plant J.">
        <title>Araport11: a complete reannotation of the Arabidopsis thaliana reference genome.</title>
        <authorList>
            <person name="Cheng C.Y."/>
            <person name="Krishnakumar V."/>
            <person name="Chan A.P."/>
            <person name="Thibaud-Nissen F."/>
            <person name="Schobel S."/>
            <person name="Town C.D."/>
        </authorList>
    </citation>
    <scope>GENOME REANNOTATION</scope>
    <source>
        <strain>cv. Columbia</strain>
    </source>
</reference>
<reference key="3">
    <citation type="journal article" date="2003" name="Science">
        <title>Empirical analysis of transcriptional activity in the Arabidopsis genome.</title>
        <authorList>
            <person name="Yamada K."/>
            <person name="Lim J."/>
            <person name="Dale J.M."/>
            <person name="Chen H."/>
            <person name="Shinn P."/>
            <person name="Palm C.J."/>
            <person name="Southwick A.M."/>
            <person name="Wu H.C."/>
            <person name="Kim C.J."/>
            <person name="Nguyen M."/>
            <person name="Pham P.K."/>
            <person name="Cheuk R.F."/>
            <person name="Karlin-Newmann G."/>
            <person name="Liu S.X."/>
            <person name="Lam B."/>
            <person name="Sakano H."/>
            <person name="Wu T."/>
            <person name="Yu G."/>
            <person name="Miranda M."/>
            <person name="Quach H.L."/>
            <person name="Tripp M."/>
            <person name="Chang C.H."/>
            <person name="Lee J.M."/>
            <person name="Toriumi M.J."/>
            <person name="Chan M.M."/>
            <person name="Tang C.C."/>
            <person name="Onodera C.S."/>
            <person name="Deng J.M."/>
            <person name="Akiyama K."/>
            <person name="Ansari Y."/>
            <person name="Arakawa T."/>
            <person name="Banh J."/>
            <person name="Banno F."/>
            <person name="Bowser L."/>
            <person name="Brooks S.Y."/>
            <person name="Carninci P."/>
            <person name="Chao Q."/>
            <person name="Choy N."/>
            <person name="Enju A."/>
            <person name="Goldsmith A.D."/>
            <person name="Gurjal M."/>
            <person name="Hansen N.F."/>
            <person name="Hayashizaki Y."/>
            <person name="Johnson-Hopson C."/>
            <person name="Hsuan V.W."/>
            <person name="Iida K."/>
            <person name="Karnes M."/>
            <person name="Khan S."/>
            <person name="Koesema E."/>
            <person name="Ishida J."/>
            <person name="Jiang P.X."/>
            <person name="Jones T."/>
            <person name="Kawai J."/>
            <person name="Kamiya A."/>
            <person name="Meyers C."/>
            <person name="Nakajima M."/>
            <person name="Narusaka M."/>
            <person name="Seki M."/>
            <person name="Sakurai T."/>
            <person name="Satou M."/>
            <person name="Tamse R."/>
            <person name="Vaysberg M."/>
            <person name="Wallender E.K."/>
            <person name="Wong C."/>
            <person name="Yamamura Y."/>
            <person name="Yuan S."/>
            <person name="Shinozaki K."/>
            <person name="Davis R.W."/>
            <person name="Theologis A."/>
            <person name="Ecker J.R."/>
        </authorList>
    </citation>
    <scope>NUCLEOTIDE SEQUENCE [LARGE SCALE MRNA]</scope>
    <source>
        <strain>cv. Columbia</strain>
    </source>
</reference>
<reference key="4">
    <citation type="journal article" date="2009" name="DNA Res.">
        <title>Analysis of multiple occurrences of alternative splicing events in Arabidopsis thaliana using novel sequenced full-length cDNAs.</title>
        <authorList>
            <person name="Iida K."/>
            <person name="Fukami-Kobayashi K."/>
            <person name="Toyoda A."/>
            <person name="Sakaki Y."/>
            <person name="Kobayashi M."/>
            <person name="Seki M."/>
            <person name="Shinozaki K."/>
        </authorList>
    </citation>
    <scope>NUCLEOTIDE SEQUENCE [LARGE SCALE MRNA]</scope>
    <source>
        <strain>cv. Columbia</strain>
    </source>
</reference>
<reference key="5">
    <citation type="submission" date="2006-07" db="EMBL/GenBank/DDBJ databases">
        <title>Large-scale analysis of RIKEN Arabidopsis full-length (RAFL) cDNAs.</title>
        <authorList>
            <person name="Totoki Y."/>
            <person name="Seki M."/>
            <person name="Ishida J."/>
            <person name="Nakajima M."/>
            <person name="Enju A."/>
            <person name="Kamiya A."/>
            <person name="Narusaka M."/>
            <person name="Shin-i T."/>
            <person name="Nakagawa M."/>
            <person name="Sakamoto N."/>
            <person name="Oishi K."/>
            <person name="Kohara Y."/>
            <person name="Kobayashi M."/>
            <person name="Toyoda A."/>
            <person name="Sakaki Y."/>
            <person name="Sakurai T."/>
            <person name="Iida K."/>
            <person name="Akiyama K."/>
            <person name="Satou M."/>
            <person name="Toyoda T."/>
            <person name="Konagaya A."/>
            <person name="Carninci P."/>
            <person name="Kawai J."/>
            <person name="Hayashizaki Y."/>
            <person name="Shinozaki K."/>
        </authorList>
    </citation>
    <scope>NUCLEOTIDE SEQUENCE [LARGE SCALE MRNA]</scope>
    <source>
        <strain>cv. Columbia</strain>
    </source>
</reference>
<reference key="6">
    <citation type="submission" date="2002-03" db="EMBL/GenBank/DDBJ databases">
        <title>Full-length cDNA from Arabidopsis thaliana.</title>
        <authorList>
            <person name="Brover V.V."/>
            <person name="Troukhan M.E."/>
            <person name="Alexandrov N.A."/>
            <person name="Lu Y.-P."/>
            <person name="Flavell R.B."/>
            <person name="Feldmann K.A."/>
        </authorList>
    </citation>
    <scope>NUCLEOTIDE SEQUENCE [LARGE SCALE MRNA]</scope>
</reference>
<reference key="7">
    <citation type="journal article" date="2024" name="Elife">
        <title>Guanidine production by plant homoarginine-6-hydroxylases.</title>
        <authorList>
            <person name="Funck D."/>
            <person name="Sinn M."/>
            <person name="Forlani G."/>
            <person name="Hartig J.S."/>
        </authorList>
    </citation>
    <scope>FUNCTION</scope>
    <scope>CATALYTIC ACTIVITY</scope>
    <scope>DISRUPTION PHENOTYPE</scope>
    <scope>BIOPHYSICOCHEMICAL PROPERTIES</scope>
    <scope>ACTIVITY REGULATION</scope>
    <scope>SUBCELLULAR LOCATION</scope>
    <source>
        <strain>cv. Columbia</strain>
    </source>
</reference>
<evidence type="ECO:0000255" key="1">
    <source>
        <dbReference type="PROSITE-ProRule" id="PRU00805"/>
    </source>
</evidence>
<evidence type="ECO:0000269" key="2">
    <source>
    </source>
</evidence>
<evidence type="ECO:0000303" key="3">
    <source>
    </source>
</evidence>
<evidence type="ECO:0000305" key="4"/>
<evidence type="ECO:0000312" key="5">
    <source>
        <dbReference type="Araport" id="AT3G50210"/>
    </source>
</evidence>
<evidence type="ECO:0000312" key="6">
    <source>
        <dbReference type="EMBL" id="CAB62300.1"/>
    </source>
</evidence>
<keyword id="KW-0025">Alternative splicing</keyword>
<keyword id="KW-0963">Cytoplasm</keyword>
<keyword id="KW-0223">Dioxygenase</keyword>
<keyword id="KW-0408">Iron</keyword>
<keyword id="KW-0479">Metal-binding</keyword>
<keyword id="KW-0560">Oxidoreductase</keyword>
<keyword id="KW-1185">Reference proteome</keyword>
<protein>
    <recommendedName>
        <fullName evidence="3">Homoarginine-6-hydroxylase 2-ODD-C23.1</fullName>
        <ecNumber evidence="1 2">1.14.11.-</ecNumber>
    </recommendedName>
    <alternativeName>
        <fullName evidence="3">2-oxoglutarate-dependent dioxygenase C23.1</fullName>
        <shortName evidence="3">At2-ODD-C23.1</shortName>
    </alternativeName>
</protein>
<name>OD231_ARATH</name>
<feature type="chain" id="PRO_0000428723" description="Homoarginine-6-hydroxylase 2-ODD-C23.1">
    <location>
        <begin position="1"/>
        <end position="332"/>
    </location>
</feature>
<feature type="domain" description="Fe2OG dioxygenase" evidence="1">
    <location>
        <begin position="182"/>
        <end position="287"/>
    </location>
</feature>
<feature type="binding site" evidence="1">
    <location>
        <position position="210"/>
    </location>
    <ligand>
        <name>Fe cation</name>
        <dbReference type="ChEBI" id="CHEBI:24875"/>
    </ligand>
</feature>
<feature type="binding site" evidence="1">
    <location>
        <position position="212"/>
    </location>
    <ligand>
        <name>Fe cation</name>
        <dbReference type="ChEBI" id="CHEBI:24875"/>
    </ligand>
</feature>
<feature type="binding site" evidence="1">
    <location>
        <position position="268"/>
    </location>
    <ligand>
        <name>Fe cation</name>
        <dbReference type="ChEBI" id="CHEBI:24875"/>
    </ligand>
</feature>
<feature type="binding site" evidence="1">
    <location>
        <position position="278"/>
    </location>
    <ligand>
        <name>2-oxoglutarate</name>
        <dbReference type="ChEBI" id="CHEBI:16810"/>
    </ligand>
</feature>
<feature type="sequence conflict" description="In Ref. 6; AAM63621." evidence="4" ref="6">
    <original>R</original>
    <variation>K</variation>
    <location>
        <position position="114"/>
    </location>
</feature>
<gene>
    <name evidence="3" type="primary">2ODDC23.1</name>
    <name evidence="5" type="ordered locus">At3g50210</name>
    <name evidence="6" type="ORF">F11C1.50</name>
</gene>
<comment type="function">
    <text evidence="2">2-oxoglutarate-dependent dioxygenase catalyzing homoarginine 6-hydroxylation thus producing 6-hydroxy-L-homoarginine (PubMed:38619227). Guanidine (Gd) is in turn synthesized by the spontaneous conversion of 6-hydroxy-L-homoarginine to (S)-2-amino-6-oxohexanoate (RHEA:79843); guanidine is a nitrogen-rich compound that can serve as a defense or signaling substance (PubMed:38619227).</text>
</comment>
<comment type="catalytic activity">
    <reaction evidence="2">
        <text>L-homoarginine + 2-oxoglutarate + O2 = 6-hydroxy-L-homoarginine + succinate + CO2</text>
        <dbReference type="Rhea" id="RHEA:79839"/>
        <dbReference type="ChEBI" id="CHEBI:15379"/>
        <dbReference type="ChEBI" id="CHEBI:16526"/>
        <dbReference type="ChEBI" id="CHEBI:16810"/>
        <dbReference type="ChEBI" id="CHEBI:30031"/>
        <dbReference type="ChEBI" id="CHEBI:143006"/>
        <dbReference type="ChEBI" id="CHEBI:231270"/>
    </reaction>
</comment>
<comment type="cofactor">
    <cofactor evidence="1">
        <name>Fe(2+)</name>
        <dbReference type="ChEBI" id="CHEBI:29033"/>
    </cofactor>
    <text evidence="1">Binds 1 Fe(2+) ion per subunit.</text>
</comment>
<comment type="activity regulation">
    <text evidence="2">Slightly inhibited by canavanine (Can), the 5-oxa-analog of arginine.</text>
</comment>
<comment type="biophysicochemical properties">
    <kinetics>
        <KM evidence="2">0.78 mM for homoarginine</KM>
    </kinetics>
    <phDependence>
        <text evidence="2">Optimum pH is 7.2. Inactive below pH 5 and above pH 9.</text>
    </phDependence>
</comment>
<comment type="subcellular location">
    <subcellularLocation>
        <location evidence="2">Cytoplasm</location>
        <location evidence="2">Cytosol</location>
    </subcellularLocation>
</comment>
<comment type="alternative products">
    <event type="alternative splicing"/>
    <isoform>
        <id>Q84MB6-1</id>
        <name>1</name>
        <sequence type="displayed"/>
    </isoform>
    <text>A number of isoforms are produced. According to EST sequences.</text>
</comment>
<comment type="disruption phenotype">
    <text evidence="2">Plants missing 2ODDC23.1, 2ODDC23.2 and 2ODDC23.3 produce reduced guanidine content.</text>
</comment>
<comment type="similarity">
    <text evidence="4">Belongs to the iron/ascorbate-dependent oxidoreductase family.</text>
</comment>
<comment type="sequence caution" evidence="4">
    <conflict type="erroneous gene model prediction">
        <sequence resource="EMBL-CDS" id="CAB62300"/>
    </conflict>
</comment>
<accession>Q84MB6</accession>
<accession>Q8LCJ7</accession>
<accession>Q9SNE6</accession>